<reference key="1">
    <citation type="journal article" date="1997" name="Yeast">
        <title>Sequence analysis of 203 kilobases from Saccharomyces cerevisiae chromosome VII.</title>
        <authorList>
            <person name="Rieger M."/>
            <person name="Brueckner M."/>
            <person name="Schaefer M."/>
            <person name="Mueller-Auer S."/>
        </authorList>
    </citation>
    <scope>NUCLEOTIDE SEQUENCE [GENOMIC DNA]</scope>
    <source>
        <strain>ATCC 204508 / S288c</strain>
    </source>
</reference>
<reference key="2">
    <citation type="journal article" date="1997" name="Nature">
        <title>The nucleotide sequence of Saccharomyces cerevisiae chromosome VII.</title>
        <authorList>
            <person name="Tettelin H."/>
            <person name="Agostoni-Carbone M.L."/>
            <person name="Albermann K."/>
            <person name="Albers M."/>
            <person name="Arroyo J."/>
            <person name="Backes U."/>
            <person name="Barreiros T."/>
            <person name="Bertani I."/>
            <person name="Bjourson A.J."/>
            <person name="Brueckner M."/>
            <person name="Bruschi C.V."/>
            <person name="Carignani G."/>
            <person name="Castagnoli L."/>
            <person name="Cerdan E."/>
            <person name="Clemente M.L."/>
            <person name="Coblenz A."/>
            <person name="Coglievina M."/>
            <person name="Coissac E."/>
            <person name="Defoor E."/>
            <person name="Del Bino S."/>
            <person name="Delius H."/>
            <person name="Delneri D."/>
            <person name="de Wergifosse P."/>
            <person name="Dujon B."/>
            <person name="Durand P."/>
            <person name="Entian K.-D."/>
            <person name="Eraso P."/>
            <person name="Escribano V."/>
            <person name="Fabiani L."/>
            <person name="Fartmann B."/>
            <person name="Feroli F."/>
            <person name="Feuermann M."/>
            <person name="Frontali L."/>
            <person name="Garcia-Gonzalez M."/>
            <person name="Garcia-Saez M.I."/>
            <person name="Goffeau A."/>
            <person name="Guerreiro P."/>
            <person name="Hani J."/>
            <person name="Hansen M."/>
            <person name="Hebling U."/>
            <person name="Hernandez K."/>
            <person name="Heumann K."/>
            <person name="Hilger F."/>
            <person name="Hofmann B."/>
            <person name="Indge K.J."/>
            <person name="James C.M."/>
            <person name="Klima R."/>
            <person name="Koetter P."/>
            <person name="Kramer B."/>
            <person name="Kramer W."/>
            <person name="Lauquin G."/>
            <person name="Leuther H."/>
            <person name="Louis E.J."/>
            <person name="Maillier E."/>
            <person name="Marconi A."/>
            <person name="Martegani E."/>
            <person name="Mazon M.J."/>
            <person name="Mazzoni C."/>
            <person name="McReynolds A.D.K."/>
            <person name="Melchioretto P."/>
            <person name="Mewes H.-W."/>
            <person name="Minenkova O."/>
            <person name="Mueller-Auer S."/>
            <person name="Nawrocki A."/>
            <person name="Netter P."/>
            <person name="Neu R."/>
            <person name="Nombela C."/>
            <person name="Oliver S.G."/>
            <person name="Panzeri L."/>
            <person name="Paoluzi S."/>
            <person name="Plevani P."/>
            <person name="Portetelle D."/>
            <person name="Portillo F."/>
            <person name="Potier S."/>
            <person name="Purnelle B."/>
            <person name="Rieger M."/>
            <person name="Riles L."/>
            <person name="Rinaldi T."/>
            <person name="Robben J."/>
            <person name="Rodrigues-Pousada C."/>
            <person name="Rodriguez-Belmonte E."/>
            <person name="Rodriguez-Torres A.M."/>
            <person name="Rose M."/>
            <person name="Ruzzi M."/>
            <person name="Saliola M."/>
            <person name="Sanchez-Perez M."/>
            <person name="Schaefer B."/>
            <person name="Schaefer M."/>
            <person name="Scharfe M."/>
            <person name="Schmidheini T."/>
            <person name="Schreer A."/>
            <person name="Skala J."/>
            <person name="Souciet J.-L."/>
            <person name="Steensma H.Y."/>
            <person name="Talla E."/>
            <person name="Thierry A."/>
            <person name="Vandenbol M."/>
            <person name="van der Aart Q.J.M."/>
            <person name="Van Dyck L."/>
            <person name="Vanoni M."/>
            <person name="Verhasselt P."/>
            <person name="Voet M."/>
            <person name="Volckaert G."/>
            <person name="Wambutt R."/>
            <person name="Watson M.D."/>
            <person name="Weber N."/>
            <person name="Wedler E."/>
            <person name="Wedler H."/>
            <person name="Wipfli P."/>
            <person name="Wolf K."/>
            <person name="Wright L.F."/>
            <person name="Zaccaria P."/>
            <person name="Zimmermann M."/>
            <person name="Zollner A."/>
            <person name="Kleine K."/>
        </authorList>
    </citation>
    <scope>NUCLEOTIDE SEQUENCE [LARGE SCALE GENOMIC DNA]</scope>
    <source>
        <strain>ATCC 204508 / S288c</strain>
    </source>
</reference>
<reference key="3">
    <citation type="journal article" date="2014" name="G3 (Bethesda)">
        <title>The reference genome sequence of Saccharomyces cerevisiae: Then and now.</title>
        <authorList>
            <person name="Engel S.R."/>
            <person name="Dietrich F.S."/>
            <person name="Fisk D.G."/>
            <person name="Binkley G."/>
            <person name="Balakrishnan R."/>
            <person name="Costanzo M.C."/>
            <person name="Dwight S.S."/>
            <person name="Hitz B.C."/>
            <person name="Karra K."/>
            <person name="Nash R.S."/>
            <person name="Weng S."/>
            <person name="Wong E.D."/>
            <person name="Lloyd P."/>
            <person name="Skrzypek M.S."/>
            <person name="Miyasato S.R."/>
            <person name="Simison M."/>
            <person name="Cherry J.M."/>
        </authorList>
    </citation>
    <scope>GENOME REANNOTATION</scope>
    <source>
        <strain>ATCC 204508 / S288c</strain>
    </source>
</reference>
<reference key="4">
    <citation type="journal article" date="1997" name="Microbiol. Mol. Biol. Rev.">
        <title>Metabolism of sulfur amino acids in Saccharomyces cerevisiae.</title>
        <authorList>
            <person name="Thomas D."/>
            <person name="Surdin-Kerjan Y."/>
        </authorList>
    </citation>
    <scope>FUNCTION</scope>
</reference>
<reference key="5">
    <citation type="journal article" date="2003" name="Nature">
        <title>Global analysis of protein localization in budding yeast.</title>
        <authorList>
            <person name="Huh W.-K."/>
            <person name="Falvo J.V."/>
            <person name="Gerke L.C."/>
            <person name="Carroll A.S."/>
            <person name="Howson R.W."/>
            <person name="Weissman J.S."/>
            <person name="O'Shea E.K."/>
        </authorList>
    </citation>
    <scope>SUBCELLULAR LOCATION [LARGE SCALE ANALYSIS]</scope>
</reference>
<reference key="6">
    <citation type="journal article" date="2003" name="Nature">
        <title>Global analysis of protein expression in yeast.</title>
        <authorList>
            <person name="Ghaemmaghami S."/>
            <person name="Huh W.-K."/>
            <person name="Bower K."/>
            <person name="Howson R.W."/>
            <person name="Belle A."/>
            <person name="Dephoure N."/>
            <person name="O'Shea E.K."/>
            <person name="Weissman J.S."/>
        </authorList>
    </citation>
    <scope>LEVEL OF PROTEIN EXPRESSION [LARGE SCALE ANALYSIS]</scope>
</reference>
<reference key="7">
    <citation type="journal article" date="2006" name="Mol. Biol. Cell">
        <title>Proteomic analysis of the yeast mitochondrial outer membrane reveals accumulation of a subclass of preproteins.</title>
        <authorList>
            <person name="Zahedi R.P."/>
            <person name="Sickmann A."/>
            <person name="Boehm A.M."/>
            <person name="Winkler C."/>
            <person name="Zufall N."/>
            <person name="Schoenfisch B."/>
            <person name="Guiard B."/>
            <person name="Pfanner N."/>
            <person name="Meisinger C."/>
        </authorList>
    </citation>
    <scope>SUBCELLULAR LOCATION</scope>
    <scope>IDENTIFICATION BY MASS SPECTROMETRY</scope>
</reference>
<reference key="8">
    <citation type="journal article" date="2007" name="Res. Microbiol.">
        <title>Multiple fungal enzymes possess cysteine synthase activity in vitro.</title>
        <authorList>
            <person name="Brzywczy J."/>
            <person name="Natorff R."/>
            <person name="Sienko M."/>
            <person name="Paszewski A."/>
        </authorList>
    </citation>
    <scope>GENE FAMILY</scope>
</reference>
<reference key="9">
    <citation type="journal article" date="2016" name="Elife">
        <title>Selective sorting and destruction of mitochondrial membrane proteins in aged yeast.</title>
        <authorList>
            <person name="Hughes A.L."/>
            <person name="Hughes C.E."/>
            <person name="Henderson K.A."/>
            <person name="Yazvenko N."/>
            <person name="Gottschling D.E."/>
        </authorList>
    </citation>
    <scope>SUBCELLULAR LOCATION</scope>
</reference>
<accession>P53206</accession>
<accession>D6VUE8</accession>
<gene>
    <name evidence="9" type="primary">MCY1</name>
    <name type="ordered locus">YGR012W</name>
</gene>
<proteinExistence type="evidence at protein level"/>
<sequence length="393" mass="42801">MSCSQNKTSVSLAWRECISIASVLIGAYASYKYYKLFKTRDIPRPKEGVEELIGNTPLVKIRSLTKATGVNIYAKLELCNPAGSAKDRVALNIIKTAEELGELVRGEPGWVFEGTSGSTGISIAVVCNALGYRAHISLPDDTSLEKLALLESLGATVNKVKPASIVDPNQYVNAAKKACNELKKSGNGIRAVFADQFENEANWKVHYQTTGPEIAHQTKGNIDAFIAGCGTGGTITGVAKFLKERAKIPCHVVLADPQGSGFYNRVNYGVMYDYVEKEGTRRRHQVDTIVEGIGLNRITHNFHMGEKFIDESIRVNDNQAIRMAKYLSVNDGLFVGSSTAINAVAAIQVAKTLPHGSNIVIIACDSGSRHLSKFWKEAKEIDHDVSLEEVINI</sequence>
<feature type="chain" id="PRO_0000167130" description="Putative mitochondrial cysteine synthase">
    <location>
        <begin position="1"/>
        <end position="393"/>
    </location>
</feature>
<feature type="transmembrane region" description="Helical" evidence="3">
    <location>
        <begin position="12"/>
        <end position="31"/>
    </location>
</feature>
<feature type="binding site" evidence="2">
    <location>
        <begin position="230"/>
        <end position="234"/>
    </location>
    <ligand>
        <name>pyridoxal 5'-phosphate</name>
        <dbReference type="ChEBI" id="CHEBI:597326"/>
    </ligand>
</feature>
<feature type="binding site" evidence="2">
    <location>
        <position position="338"/>
    </location>
    <ligand>
        <name>pyridoxal 5'-phosphate</name>
        <dbReference type="ChEBI" id="CHEBI:597326"/>
    </ligand>
</feature>
<feature type="modified residue" description="N6-(pyridoxal phosphate)lysine" evidence="2">
    <location>
        <position position="86"/>
    </location>
</feature>
<protein>
    <recommendedName>
        <fullName evidence="11">Putative mitochondrial cysteine synthase</fullName>
        <shortName>CS</shortName>
        <ecNumber>2.5.1.47</ecNumber>
    </recommendedName>
    <alternativeName>
        <fullName evidence="8">Cysteine synthase-like protein</fullName>
        <shortName>CSl</shortName>
    </alternativeName>
    <alternativeName>
        <fullName>O-acetylserine (thiol)-lyase</fullName>
        <shortName>OAS-TL</shortName>
    </alternativeName>
    <alternativeName>
        <fullName>O-acetylserine sulfhydrylase</fullName>
    </alternativeName>
</protein>
<evidence type="ECO:0000250" key="1">
    <source>
        <dbReference type="UniProtKB" id="P0ABK5"/>
    </source>
</evidence>
<evidence type="ECO:0000250" key="2">
    <source>
        <dbReference type="UniProtKB" id="P16703"/>
    </source>
</evidence>
<evidence type="ECO:0000255" key="3"/>
<evidence type="ECO:0000269" key="4">
    <source>
    </source>
</evidence>
<evidence type="ECO:0000269" key="5">
    <source>
    </source>
</evidence>
<evidence type="ECO:0000269" key="6">
    <source>
    </source>
</evidence>
<evidence type="ECO:0000269" key="7">
    <source>
    </source>
</evidence>
<evidence type="ECO:0000303" key="8">
    <source>
    </source>
</evidence>
<evidence type="ECO:0000303" key="9">
    <source>
    </source>
</evidence>
<evidence type="ECO:0000305" key="10"/>
<evidence type="ECO:0000305" key="11">
    <source>
    </source>
</evidence>
<organism>
    <name type="scientific">Saccharomyces cerevisiae (strain ATCC 204508 / S288c)</name>
    <name type="common">Baker's yeast</name>
    <dbReference type="NCBI Taxonomy" id="559292"/>
    <lineage>
        <taxon>Eukaryota</taxon>
        <taxon>Fungi</taxon>
        <taxon>Dikarya</taxon>
        <taxon>Ascomycota</taxon>
        <taxon>Saccharomycotina</taxon>
        <taxon>Saccharomycetes</taxon>
        <taxon>Saccharomycetales</taxon>
        <taxon>Saccharomycetaceae</taxon>
        <taxon>Saccharomyces</taxon>
    </lineage>
</organism>
<keyword id="KW-0472">Membrane</keyword>
<keyword id="KW-0496">Mitochondrion</keyword>
<keyword id="KW-1000">Mitochondrion outer membrane</keyword>
<keyword id="KW-0663">Pyridoxal phosphate</keyword>
<keyword id="KW-1185">Reference proteome</keyword>
<keyword id="KW-0808">Transferase</keyword>
<keyword id="KW-0812">Transmembrane</keyword>
<keyword id="KW-1133">Transmembrane helix</keyword>
<name>MCY1_YEAST</name>
<comment type="function">
    <text evidence="11">Putative cysteine synthase that catalyzes the conversion of O-acetyl-L-serine (OAS) into cysteine, the last step in the cysteine biosynthesis pathway. However, this CS-like protein is unlikely to function in cysteine biosynthesis. It seems that in S.cerevisiae cysteine biosynthesis occurs exclusively through the cystathionine pathway and not via direct incorporation of sulfur into OAS.</text>
</comment>
<comment type="catalytic activity">
    <reaction evidence="1">
        <text>O-acetyl-L-serine + hydrogen sulfide = L-cysteine + acetate</text>
        <dbReference type="Rhea" id="RHEA:14829"/>
        <dbReference type="ChEBI" id="CHEBI:29919"/>
        <dbReference type="ChEBI" id="CHEBI:30089"/>
        <dbReference type="ChEBI" id="CHEBI:35235"/>
        <dbReference type="ChEBI" id="CHEBI:58340"/>
        <dbReference type="EC" id="2.5.1.47"/>
    </reaction>
</comment>
<comment type="cofactor">
    <cofactor evidence="1">
        <name>pyridoxal 5'-phosphate</name>
        <dbReference type="ChEBI" id="CHEBI:597326"/>
    </cofactor>
</comment>
<comment type="subcellular location">
    <subcellularLocation>
        <location evidence="4">Mitochondrion</location>
    </subcellularLocation>
    <subcellularLocation>
        <location evidence="6">Mitochondrion outer membrane</location>
        <topology evidence="3">Single-pass membrane protein</topology>
    </subcellularLocation>
    <text evidence="7">Selective removal from mitochondrial outer membrane is achieved by sorting into a mitochondrial-derived compartment, or MDC, followed by release through mitochondrial fission and elimination by autophagy.</text>
</comment>
<comment type="miscellaneous">
    <text evidence="5">Present with 4650 molecules/cell in log phase SD medium.</text>
</comment>
<comment type="similarity">
    <text evidence="10">Belongs to the cysteine synthase/cystathionine beta-synthase family.</text>
</comment>
<dbReference type="EC" id="2.5.1.47"/>
<dbReference type="EMBL" id="Z72797">
    <property type="protein sequence ID" value="CAA96995.1"/>
    <property type="molecule type" value="Genomic_DNA"/>
</dbReference>
<dbReference type="EMBL" id="BK006941">
    <property type="protein sequence ID" value="DAA08109.1"/>
    <property type="molecule type" value="Genomic_DNA"/>
</dbReference>
<dbReference type="PIR" id="S64303">
    <property type="entry name" value="S64303"/>
</dbReference>
<dbReference type="RefSeq" id="NP_011526.1">
    <property type="nucleotide sequence ID" value="NM_001181141.1"/>
</dbReference>
<dbReference type="SMR" id="P53206"/>
<dbReference type="BioGRID" id="33255">
    <property type="interactions" value="161"/>
</dbReference>
<dbReference type="FunCoup" id="P53206">
    <property type="interactions" value="315"/>
</dbReference>
<dbReference type="IntAct" id="P53206">
    <property type="interactions" value="24"/>
</dbReference>
<dbReference type="MINT" id="P53206"/>
<dbReference type="STRING" id="4932.YGR012W"/>
<dbReference type="iPTMnet" id="P53206"/>
<dbReference type="PaxDb" id="4932-YGR012W"/>
<dbReference type="PeptideAtlas" id="P53206"/>
<dbReference type="EnsemblFungi" id="YGR012W_mRNA">
    <property type="protein sequence ID" value="YGR012W"/>
    <property type="gene ID" value="YGR012W"/>
</dbReference>
<dbReference type="GeneID" id="852895"/>
<dbReference type="KEGG" id="sce:YGR012W"/>
<dbReference type="AGR" id="SGD:S000003244"/>
<dbReference type="SGD" id="S000003244">
    <property type="gene designation" value="MCY1"/>
</dbReference>
<dbReference type="VEuPathDB" id="FungiDB:YGR012W"/>
<dbReference type="eggNOG" id="KOG1481">
    <property type="taxonomic scope" value="Eukaryota"/>
</dbReference>
<dbReference type="HOGENOM" id="CLU_021018_1_0_1"/>
<dbReference type="InParanoid" id="P53206"/>
<dbReference type="OMA" id="WMADYGF"/>
<dbReference type="OrthoDB" id="10259545at2759"/>
<dbReference type="BioGRID-ORCS" id="852895">
    <property type="hits" value="3 hits in 10 CRISPR screens"/>
</dbReference>
<dbReference type="PRO" id="PR:P53206"/>
<dbReference type="Proteomes" id="UP000002311">
    <property type="component" value="Chromosome VII"/>
</dbReference>
<dbReference type="RNAct" id="P53206">
    <property type="molecule type" value="protein"/>
</dbReference>
<dbReference type="GO" id="GO:0005737">
    <property type="term" value="C:cytoplasm"/>
    <property type="evidence" value="ECO:0000318"/>
    <property type="project" value="GO_Central"/>
</dbReference>
<dbReference type="GO" id="GO:0005741">
    <property type="term" value="C:mitochondrial outer membrane"/>
    <property type="evidence" value="ECO:0007005"/>
    <property type="project" value="SGD"/>
</dbReference>
<dbReference type="GO" id="GO:0005739">
    <property type="term" value="C:mitochondrion"/>
    <property type="evidence" value="ECO:0007005"/>
    <property type="project" value="SGD"/>
</dbReference>
<dbReference type="GO" id="GO:0004124">
    <property type="term" value="F:cysteine synthase activity"/>
    <property type="evidence" value="ECO:0000318"/>
    <property type="project" value="GO_Central"/>
</dbReference>
<dbReference type="GO" id="GO:0006535">
    <property type="term" value="P:cysteine biosynthetic process from serine"/>
    <property type="evidence" value="ECO:0000318"/>
    <property type="project" value="GO_Central"/>
</dbReference>
<dbReference type="CDD" id="cd01561">
    <property type="entry name" value="CBS_like"/>
    <property type="match status" value="1"/>
</dbReference>
<dbReference type="FunFam" id="3.40.50.1100:FF:000096">
    <property type="entry name" value="Related to cysteine synthase"/>
    <property type="match status" value="1"/>
</dbReference>
<dbReference type="Gene3D" id="3.40.50.1100">
    <property type="match status" value="2"/>
</dbReference>
<dbReference type="InterPro" id="IPR050214">
    <property type="entry name" value="Cys_Synth/Cystath_Beta-Synth"/>
</dbReference>
<dbReference type="InterPro" id="IPR001216">
    <property type="entry name" value="P-phosphate_BS"/>
</dbReference>
<dbReference type="InterPro" id="IPR001926">
    <property type="entry name" value="TrpB-like_PALP"/>
</dbReference>
<dbReference type="InterPro" id="IPR036052">
    <property type="entry name" value="TrpB-like_PALP_sf"/>
</dbReference>
<dbReference type="PANTHER" id="PTHR10314">
    <property type="entry name" value="CYSTATHIONINE BETA-SYNTHASE"/>
    <property type="match status" value="1"/>
</dbReference>
<dbReference type="Pfam" id="PF00291">
    <property type="entry name" value="PALP"/>
    <property type="match status" value="1"/>
</dbReference>
<dbReference type="SUPFAM" id="SSF53686">
    <property type="entry name" value="Tryptophan synthase beta subunit-like PLP-dependent enzymes"/>
    <property type="match status" value="1"/>
</dbReference>
<dbReference type="PROSITE" id="PS00901">
    <property type="entry name" value="CYS_SYNTHASE"/>
    <property type="match status" value="1"/>
</dbReference>